<reference key="1">
    <citation type="submission" date="2002-02" db="EMBL/GenBank/DDBJ databases">
        <title>Molecular characterization of the exocyst complex in Arabidopsis thaliana.</title>
        <authorList>
            <person name="Elias M."/>
            <person name="Cvrckova F."/>
            <person name="Zarsky V."/>
        </authorList>
    </citation>
    <scope>NUCLEOTIDE SEQUENCE [MRNA]</scope>
    <source>
        <strain>cv. Columbia</strain>
    </source>
</reference>
<reference key="2">
    <citation type="journal article" date="2014" name="PLoS ONE">
        <title>Dissecting a hidden gene duplication: the Arabidopsis thaliana SEC10 locus.</title>
        <authorList>
            <person name="Vukasinovic N."/>
            <person name="Cvrckova F."/>
            <person name="Elias M."/>
            <person name="Cole R."/>
            <person name="Fowler J.E."/>
            <person name="Zarsky V."/>
            <person name="Synek L."/>
        </authorList>
    </citation>
    <scope>NUCLEOTIDE SEQUENCE [GENOMIC DNA]</scope>
    <scope>TISSUE SPECIFICITY</scope>
    <scope>DISRUPTION PHENOTYPE</scope>
</reference>
<reference key="3">
    <citation type="journal article" date="2000" name="Nature">
        <title>Sequence and analysis of chromosome 5 of the plant Arabidopsis thaliana.</title>
        <authorList>
            <person name="Tabata S."/>
            <person name="Kaneko T."/>
            <person name="Nakamura Y."/>
            <person name="Kotani H."/>
            <person name="Kato T."/>
            <person name="Asamizu E."/>
            <person name="Miyajima N."/>
            <person name="Sasamoto S."/>
            <person name="Kimura T."/>
            <person name="Hosouchi T."/>
            <person name="Kawashima K."/>
            <person name="Kohara M."/>
            <person name="Matsumoto M."/>
            <person name="Matsuno A."/>
            <person name="Muraki A."/>
            <person name="Nakayama S."/>
            <person name="Nakazaki N."/>
            <person name="Naruo K."/>
            <person name="Okumura S."/>
            <person name="Shinpo S."/>
            <person name="Takeuchi C."/>
            <person name="Wada T."/>
            <person name="Watanabe A."/>
            <person name="Yamada M."/>
            <person name="Yasuda M."/>
            <person name="Sato S."/>
            <person name="de la Bastide M."/>
            <person name="Huang E."/>
            <person name="Spiegel L."/>
            <person name="Gnoj L."/>
            <person name="O'Shaughnessy A."/>
            <person name="Preston R."/>
            <person name="Habermann K."/>
            <person name="Murray J."/>
            <person name="Johnson D."/>
            <person name="Rohlfing T."/>
            <person name="Nelson J."/>
            <person name="Stoneking T."/>
            <person name="Pepin K."/>
            <person name="Spieth J."/>
            <person name="Sekhon M."/>
            <person name="Armstrong J."/>
            <person name="Becker M."/>
            <person name="Belter E."/>
            <person name="Cordum H."/>
            <person name="Cordes M."/>
            <person name="Courtney L."/>
            <person name="Courtney W."/>
            <person name="Dante M."/>
            <person name="Du H."/>
            <person name="Edwards J."/>
            <person name="Fryman J."/>
            <person name="Haakensen B."/>
            <person name="Lamar E."/>
            <person name="Latreille P."/>
            <person name="Leonard S."/>
            <person name="Meyer R."/>
            <person name="Mulvaney E."/>
            <person name="Ozersky P."/>
            <person name="Riley A."/>
            <person name="Strowmatt C."/>
            <person name="Wagner-McPherson C."/>
            <person name="Wollam A."/>
            <person name="Yoakum M."/>
            <person name="Bell M."/>
            <person name="Dedhia N."/>
            <person name="Parnell L."/>
            <person name="Shah R."/>
            <person name="Rodriguez M."/>
            <person name="Hoon See L."/>
            <person name="Vil D."/>
            <person name="Baker J."/>
            <person name="Kirchoff K."/>
            <person name="Toth K."/>
            <person name="King L."/>
            <person name="Bahret A."/>
            <person name="Miller B."/>
            <person name="Marra M.A."/>
            <person name="Martienssen R."/>
            <person name="McCombie W.R."/>
            <person name="Wilson R.K."/>
            <person name="Murphy G."/>
            <person name="Bancroft I."/>
            <person name="Volckaert G."/>
            <person name="Wambutt R."/>
            <person name="Duesterhoeft A."/>
            <person name="Stiekema W."/>
            <person name="Pohl T."/>
            <person name="Entian K.-D."/>
            <person name="Terryn N."/>
            <person name="Hartley N."/>
            <person name="Bent E."/>
            <person name="Johnson S."/>
            <person name="Langham S.-A."/>
            <person name="McCullagh B."/>
            <person name="Robben J."/>
            <person name="Grymonprez B."/>
            <person name="Zimmermann W."/>
            <person name="Ramsperger U."/>
            <person name="Wedler H."/>
            <person name="Balke K."/>
            <person name="Wedler E."/>
            <person name="Peters S."/>
            <person name="van Staveren M."/>
            <person name="Dirkse W."/>
            <person name="Mooijman P."/>
            <person name="Klein Lankhorst R."/>
            <person name="Weitzenegger T."/>
            <person name="Bothe G."/>
            <person name="Rose M."/>
            <person name="Hauf J."/>
            <person name="Berneiser S."/>
            <person name="Hempel S."/>
            <person name="Feldpausch M."/>
            <person name="Lamberth S."/>
            <person name="Villarroel R."/>
            <person name="Gielen J."/>
            <person name="Ardiles W."/>
            <person name="Bents O."/>
            <person name="Lemcke K."/>
            <person name="Kolesov G."/>
            <person name="Mayer K.F.X."/>
            <person name="Rudd S."/>
            <person name="Schoof H."/>
            <person name="Schueller C."/>
            <person name="Zaccaria P."/>
            <person name="Mewes H.-W."/>
            <person name="Bevan M."/>
            <person name="Fransz P.F."/>
        </authorList>
    </citation>
    <scope>NUCLEOTIDE SEQUENCE [LARGE SCALE GENOMIC DNA]</scope>
    <source>
        <strain>cv. Columbia</strain>
    </source>
</reference>
<reference key="4">
    <citation type="journal article" date="2017" name="Plant J.">
        <title>Araport11: a complete reannotation of the Arabidopsis thaliana reference genome.</title>
        <authorList>
            <person name="Cheng C.Y."/>
            <person name="Krishnakumar V."/>
            <person name="Chan A.P."/>
            <person name="Thibaud-Nissen F."/>
            <person name="Schobel S."/>
            <person name="Town C.D."/>
        </authorList>
    </citation>
    <scope>GENOME REANNOTATION</scope>
    <source>
        <strain>cv. Columbia</strain>
    </source>
</reference>
<reference key="5">
    <citation type="journal article" date="2008" name="Plant Cell">
        <title>An exocyst complex functions in plant cell growth in Arabidopsis and tobacco.</title>
        <authorList>
            <person name="Hala M."/>
            <person name="Cole R."/>
            <person name="Synek L."/>
            <person name="Drdova E."/>
            <person name="Pecenkova T."/>
            <person name="Nordheim A."/>
            <person name="Lamkemeyer T."/>
            <person name="Madlung J."/>
            <person name="Hochholdinger F."/>
            <person name="Fowler J.E."/>
            <person name="Zarsky V."/>
        </authorList>
    </citation>
    <scope>COMPONENT OF THE EXOCYST COMPLEX</scope>
</reference>
<reference key="6">
    <citation type="journal article" date="2010" name="New Phytol.">
        <title>Characterization of the Arabidopsis thaliana exocyst complex gene families by phylogenetic, expression profiling, and subcellular localization studies.</title>
        <authorList>
            <person name="Chong Y.T."/>
            <person name="Gidda S.K."/>
            <person name="Sanford C."/>
            <person name="Parkinson J."/>
            <person name="Mullen R.T."/>
            <person name="Goring D.R."/>
        </authorList>
    </citation>
    <scope>GENE FAMILY</scope>
    <scope>NOMENCLATURE</scope>
</reference>
<reference key="7">
    <citation type="journal article" date="2010" name="Plant Cell">
        <title>The Arabidopsis exocyst complex is involved in cytokinesis and cell plate maturation.</title>
        <authorList>
            <person name="Fendrych M."/>
            <person name="Synek L."/>
            <person name="Pecenkova T."/>
            <person name="Toupalova H."/>
            <person name="Cole R."/>
            <person name="Drdova E."/>
            <person name="Nebesarova J."/>
            <person name="Sedinova M."/>
            <person name="Hala M."/>
            <person name="Fowler J.E."/>
            <person name="Zarsky V."/>
        </authorList>
    </citation>
    <scope>FUNCTION</scope>
    <scope>INTERACTION WITH EXO84B</scope>
</reference>
<reference key="8">
    <citation type="journal article" date="2013" name="Plant J.">
        <title>The exocyst complex contributes to PIN auxin efflux carrier recycling and polar auxin transport in Arabidopsis.</title>
        <authorList>
            <person name="Drdova E.J."/>
            <person name="Synek L."/>
            <person name="Pecenkova T."/>
            <person name="Hala M."/>
            <person name="Kulich I."/>
            <person name="Fowler J.E."/>
            <person name="Murphy A.S."/>
            <person name="Zarsky V."/>
        </authorList>
    </citation>
    <scope>FUNCTION</scope>
</reference>
<reference key="9">
    <citation type="journal article" date="2014" name="Mol. Biol. Cell">
        <title>Exo70E2 is essential for exocyst subunit recruitment and EXPO formation in both plants and animals.</title>
        <authorList>
            <person name="Ding Y."/>
            <person name="Wang J."/>
            <person name="Chun Lai J.H."/>
            <person name="Ling Chan V.H."/>
            <person name="Wang X."/>
            <person name="Cai Y."/>
            <person name="Tan X."/>
            <person name="Bao Y."/>
            <person name="Xia J."/>
            <person name="Robinson D.G."/>
            <person name="Jiang L."/>
        </authorList>
    </citation>
    <scope>INTERACTION WITH EXO70E2</scope>
    <scope>SUBCELLULAR LOCATION</scope>
    <source>
        <strain>cv. Columbia</strain>
    </source>
</reference>
<evidence type="ECO:0000255" key="1"/>
<evidence type="ECO:0000269" key="2">
    <source>
    </source>
</evidence>
<evidence type="ECO:0000269" key="3">
    <source>
    </source>
</evidence>
<evidence type="ECO:0000269" key="4">
    <source>
    </source>
</evidence>
<evidence type="ECO:0000269" key="5">
    <source>
    </source>
</evidence>
<evidence type="ECO:0000303" key="6">
    <source>
    </source>
</evidence>
<evidence type="ECO:0000305" key="7"/>
<evidence type="ECO:0000305" key="8">
    <source>
    </source>
</evidence>
<gene>
    <name evidence="6" type="primary">SEC10b</name>
    <name evidence="6" type="ordered locus">At5g12365</name>
</gene>
<name>SECAB_ARATH</name>
<dbReference type="EMBL" id="AF479280">
    <property type="protein sequence ID" value="AAL87123.1"/>
    <property type="molecule type" value="mRNA"/>
</dbReference>
<dbReference type="EMBL" id="HG764169">
    <property type="protein sequence ID" value="CDJ79774.3"/>
    <property type="molecule type" value="Genomic_DNA"/>
</dbReference>
<dbReference type="EMBL" id="CP002688">
    <property type="status" value="NOT_ANNOTATED_CDS"/>
    <property type="molecule type" value="Genomic_DNA"/>
</dbReference>
<dbReference type="SMR" id="X5JB51"/>
<dbReference type="FunCoup" id="X5JB51">
    <property type="interactions" value="3775"/>
</dbReference>
<dbReference type="STRING" id="3702.X5JB51"/>
<dbReference type="GlyGen" id="X5JB51">
    <property type="glycosylation" value="1 site"/>
</dbReference>
<dbReference type="Araport" id="AT5G12365"/>
<dbReference type="TAIR" id="AT5G12365"/>
<dbReference type="InParanoid" id="X5JB51"/>
<dbReference type="PRO" id="PR:X5JB51"/>
<dbReference type="Proteomes" id="UP000006548">
    <property type="component" value="Chromosome 5"/>
</dbReference>
<dbReference type="ExpressionAtlas" id="X5JB51">
    <property type="expression patterns" value="baseline and differential"/>
</dbReference>
<dbReference type="GO" id="GO:0005829">
    <property type="term" value="C:cytosol"/>
    <property type="evidence" value="ECO:0000314"/>
    <property type="project" value="UniProtKB"/>
</dbReference>
<dbReference type="GO" id="GO:0000145">
    <property type="term" value="C:exocyst"/>
    <property type="evidence" value="ECO:0000314"/>
    <property type="project" value="UniProtKB"/>
</dbReference>
<dbReference type="GO" id="GO:0070062">
    <property type="term" value="C:extracellular exosome"/>
    <property type="evidence" value="ECO:0000314"/>
    <property type="project" value="UniProtKB"/>
</dbReference>
<dbReference type="GO" id="GO:0016020">
    <property type="term" value="C:membrane"/>
    <property type="evidence" value="ECO:0000314"/>
    <property type="project" value="UniProtKB"/>
</dbReference>
<dbReference type="GO" id="GO:0005886">
    <property type="term" value="C:plasma membrane"/>
    <property type="evidence" value="ECO:0000314"/>
    <property type="project" value="UniProtKB"/>
</dbReference>
<dbReference type="GO" id="GO:0009506">
    <property type="term" value="C:plasmodesma"/>
    <property type="evidence" value="ECO:0000314"/>
    <property type="project" value="UniProtKB"/>
</dbReference>
<dbReference type="GO" id="GO:0060321">
    <property type="term" value="P:acceptance of pollen"/>
    <property type="evidence" value="ECO:0000315"/>
    <property type="project" value="UniProtKB"/>
</dbReference>
<dbReference type="GO" id="GO:0006887">
    <property type="term" value="P:exocytosis"/>
    <property type="evidence" value="ECO:0000318"/>
    <property type="project" value="GO_Central"/>
</dbReference>
<dbReference type="GO" id="GO:0006893">
    <property type="term" value="P:Golgi to plasma membrane transport"/>
    <property type="evidence" value="ECO:0000318"/>
    <property type="project" value="GO_Central"/>
</dbReference>
<dbReference type="Gene3D" id="1.20.58.1970">
    <property type="match status" value="1"/>
</dbReference>
<dbReference type="InterPro" id="IPR009976">
    <property type="entry name" value="Sec10-like"/>
</dbReference>
<dbReference type="InterPro" id="IPR048627">
    <property type="entry name" value="Sec10_HB"/>
</dbReference>
<dbReference type="InterPro" id="IPR048625">
    <property type="entry name" value="Sec10_N"/>
</dbReference>
<dbReference type="PANTHER" id="PTHR12100:SF0">
    <property type="entry name" value="EXOCYST COMPLEX COMPONENT 5"/>
    <property type="match status" value="1"/>
</dbReference>
<dbReference type="PANTHER" id="PTHR12100">
    <property type="entry name" value="SEC10"/>
    <property type="match status" value="1"/>
</dbReference>
<dbReference type="Pfam" id="PF07393">
    <property type="entry name" value="Sec10_HB"/>
    <property type="match status" value="2"/>
</dbReference>
<dbReference type="Pfam" id="PF20667">
    <property type="entry name" value="Sec10_N"/>
    <property type="match status" value="1"/>
</dbReference>
<comment type="function">
    <text evidence="2 3">Component of the exocyst complex involved in the docking of exocytic vesicles with fusion sites on the plasma membrane during regulated or polarized secretion. Involved in polarized cell growth and organ morphogenesis. During cytokinesis, involved in cell plate initiation, cell plate maturation and formation of new primary cell wall.</text>
</comment>
<comment type="subunit">
    <text evidence="2 4">The exocyst complex is composed of SEC3, SEC5, SEC6, SEC8, SEC10, EXO70A1 and EXO84B. Interacts with EXO84B. Binds to EXO70E2 (PubMed:24307681).</text>
</comment>
<comment type="subcellular location">
    <subcellularLocation>
        <location evidence="4">Cytoplasm</location>
        <location evidence="4">Cytosol</location>
    </subcellularLocation>
    <subcellularLocation>
        <location evidence="4">Secreted</location>
        <location evidence="4">Extracellular exosome</location>
    </subcellularLocation>
    <text evidence="4">Shuttles from the cytoplasm to the exocyst-positive organelle (EXPO) in the presence of EXO70E2.</text>
</comment>
<comment type="tissue specificity">
    <text evidence="5">Expressed in seedlings, roots, leaves and flowers.</text>
</comment>
<comment type="disruption phenotype">
    <text evidence="5">No visible phenotype, due to the redundancy with SEC10a.</text>
</comment>
<comment type="similarity">
    <text evidence="7">Belongs to the SEC10 family.</text>
</comment>
<comment type="caution">
    <text evidence="8">This locus, comprising the single gene At5g12370 in the original reference genome assembly, contains in fact two paralogous genes in tandem, SEC10a (At5g12370) and SEC10b (At5g12365), and a sequence segment of 7 kb in length is missing from the reference genome sequence.</text>
</comment>
<feature type="chain" id="PRO_0000438626" description="Exocyst complex component SEC10b">
    <location>
        <begin position="1"/>
        <end position="829"/>
    </location>
</feature>
<feature type="coiled-coil region" evidence="1">
    <location>
        <begin position="244"/>
        <end position="266"/>
    </location>
</feature>
<sequence>MTERIRARGPRSSSVNSVPLILDIEDFKGDFSFDALFGNLVNDLLPSFLDEEADSGDGHGNIAGVDGLTNGHLRGQSAPLSSAPFFPEVDGLLSLFKDACKELVDLRKQVDGRLNTLKKEVSTQDSKHRKTLTEIEKGVDGLFESFARLDGRISSVGQTAAKIGDHLQSADAQRETASQTIDLIKYLMEFNGSPGDLMELSALFSDDSRVAEAASIAQKLRSFAEEDIGRQGASTAAGNATPGRGLEVAVANLQDYCNELENRLLSRFDAASQRRDLSTMSECAKILSQFNRGTSAMQHYVATRPMFIDVEVMNSDIRLVLGDHGSQPSPSNVARGLSALFKEITDTVRKEAATITAVFPTPNEVMAILVQRVLEQRVTGILDKILAKPSLMSPPPVQEGGLLLYLRMLAVAYERTQELAKDLRAVGCGDLDVEDLTESLFSSHKDEYPEHERASLKQLYQAKMEELRAESQQVSESSGTIGRSKGASISSSLQQISVTFVTEFVRWNEEAITRCTLFSSQPATLAANVKAIFTCLLDQVSVYITEGLERARDSLSEAAALRERFVLGTSVSRRVAAAAASAAEAAAAAGESSFKSFMVAVQRCGSSVAIVQQYFANSISRLLLPVDGAHAASCEEMSTALSKAEAAAYKGLQQCIETVMAEVDRLLSSEQKSTDYRSPDDGIASDHRPTNACIRVVAYLSRVLESAFTALEGLNKQAFLTELGNRLEKLLLTHWQKFTFNPSGGLRLKRDLNEYVGFVKSFGAPSVDEKFELLGIIANVFIVAPDSLPTLFEGSPSIRKDAQRFIQLREDYKSAKLATKLSSLWPSLS</sequence>
<organism>
    <name type="scientific">Arabidopsis thaliana</name>
    <name type="common">Mouse-ear cress</name>
    <dbReference type="NCBI Taxonomy" id="3702"/>
    <lineage>
        <taxon>Eukaryota</taxon>
        <taxon>Viridiplantae</taxon>
        <taxon>Streptophyta</taxon>
        <taxon>Embryophyta</taxon>
        <taxon>Tracheophyta</taxon>
        <taxon>Spermatophyta</taxon>
        <taxon>Magnoliopsida</taxon>
        <taxon>eudicotyledons</taxon>
        <taxon>Gunneridae</taxon>
        <taxon>Pentapetalae</taxon>
        <taxon>rosids</taxon>
        <taxon>malvids</taxon>
        <taxon>Brassicales</taxon>
        <taxon>Brassicaceae</taxon>
        <taxon>Camelineae</taxon>
        <taxon>Arabidopsis</taxon>
    </lineage>
</organism>
<proteinExistence type="evidence at protein level"/>
<keyword id="KW-0175">Coiled coil</keyword>
<keyword id="KW-0963">Cytoplasm</keyword>
<keyword id="KW-0268">Exocytosis</keyword>
<keyword id="KW-1185">Reference proteome</keyword>
<keyword id="KW-0964">Secreted</keyword>
<keyword id="KW-0813">Transport</keyword>
<accession>X5JB51</accession>
<accession>Q56W60</accession>
<accession>Q8RVQ5</accession>
<accession>Q94CK5</accession>
<protein>
    <recommendedName>
        <fullName evidence="6">Exocyst complex component SEC10b</fullName>
        <shortName evidence="6">AtSec10b</shortName>
    </recommendedName>
</protein>